<keyword id="KW-1003">Cell membrane</keyword>
<keyword id="KW-0175">Coiled coil</keyword>
<keyword id="KW-1015">Disulfide bond</keyword>
<keyword id="KW-0325">Glycoprotein</keyword>
<keyword id="KW-0430">Lectin</keyword>
<keyword id="KW-0472">Membrane</keyword>
<keyword id="KW-1185">Reference proteome</keyword>
<keyword id="KW-0735">Signal-anchor</keyword>
<keyword id="KW-0812">Transmembrane</keyword>
<keyword id="KW-1133">Transmembrane helix</keyword>
<proteinExistence type="evidence at protein level"/>
<feature type="chain" id="PRO_0000223692" description="C-type lectin domain family 4 member G">
    <location>
        <begin position="1"/>
        <end position="294"/>
    </location>
</feature>
<feature type="topological domain" description="Cytoplasmic" evidence="2">
    <location>
        <begin position="1"/>
        <end position="30"/>
    </location>
</feature>
<feature type="transmembrane region" description="Helical; Signal-anchor for type II membrane protein" evidence="2">
    <location>
        <begin position="31"/>
        <end position="51"/>
    </location>
</feature>
<feature type="topological domain" description="Extracellular" evidence="2">
    <location>
        <begin position="52"/>
        <end position="294"/>
    </location>
</feature>
<feature type="domain" description="C-type lectin" evidence="3">
    <location>
        <begin position="172"/>
        <end position="287"/>
    </location>
</feature>
<feature type="coiled-coil region" evidence="2">
    <location>
        <begin position="100"/>
        <end position="151"/>
    </location>
</feature>
<feature type="glycosylation site" description="N-linked (GlcNAc...) asparagine" evidence="2">
    <location>
        <position position="73"/>
    </location>
</feature>
<feature type="glycosylation site" description="N-linked (GlcNAc...) asparagine" evidence="2">
    <location>
        <position position="159"/>
    </location>
</feature>
<feature type="glycosylation site" description="N-linked (GlcNAc...) asparagine" evidence="2">
    <location>
        <position position="246"/>
    </location>
</feature>
<feature type="glycosylation site" description="N-linked (GlcNAc...) asparagine" evidence="2">
    <location>
        <position position="256"/>
    </location>
</feature>
<feature type="disulfide bond" evidence="3">
    <location>
        <begin position="264"/>
        <end position="278"/>
    </location>
</feature>
<feature type="sequence conflict" description="In Ref. 2; AAH87963." evidence="4" ref="2">
    <original>N</original>
    <variation>S</variation>
    <location>
        <position position="2"/>
    </location>
</feature>
<feature type="sequence conflict" description="In Ref. 2; AAH87963." evidence="4" ref="2">
    <original>K</original>
    <variation>E</variation>
    <location>
        <position position="8"/>
    </location>
</feature>
<reference key="1">
    <citation type="journal article" date="2005" name="Science">
        <title>The transcriptional landscape of the mammalian genome.</title>
        <authorList>
            <person name="Carninci P."/>
            <person name="Kasukawa T."/>
            <person name="Katayama S."/>
            <person name="Gough J."/>
            <person name="Frith M.C."/>
            <person name="Maeda N."/>
            <person name="Oyama R."/>
            <person name="Ravasi T."/>
            <person name="Lenhard B."/>
            <person name="Wells C."/>
            <person name="Kodzius R."/>
            <person name="Shimokawa K."/>
            <person name="Bajic V.B."/>
            <person name="Brenner S.E."/>
            <person name="Batalov S."/>
            <person name="Forrest A.R."/>
            <person name="Zavolan M."/>
            <person name="Davis M.J."/>
            <person name="Wilming L.G."/>
            <person name="Aidinis V."/>
            <person name="Allen J.E."/>
            <person name="Ambesi-Impiombato A."/>
            <person name="Apweiler R."/>
            <person name="Aturaliya R.N."/>
            <person name="Bailey T.L."/>
            <person name="Bansal M."/>
            <person name="Baxter L."/>
            <person name="Beisel K.W."/>
            <person name="Bersano T."/>
            <person name="Bono H."/>
            <person name="Chalk A.M."/>
            <person name="Chiu K.P."/>
            <person name="Choudhary V."/>
            <person name="Christoffels A."/>
            <person name="Clutterbuck D.R."/>
            <person name="Crowe M.L."/>
            <person name="Dalla E."/>
            <person name="Dalrymple B.P."/>
            <person name="de Bono B."/>
            <person name="Della Gatta G."/>
            <person name="di Bernardo D."/>
            <person name="Down T."/>
            <person name="Engstrom P."/>
            <person name="Fagiolini M."/>
            <person name="Faulkner G."/>
            <person name="Fletcher C.F."/>
            <person name="Fukushima T."/>
            <person name="Furuno M."/>
            <person name="Futaki S."/>
            <person name="Gariboldi M."/>
            <person name="Georgii-Hemming P."/>
            <person name="Gingeras T.R."/>
            <person name="Gojobori T."/>
            <person name="Green R.E."/>
            <person name="Gustincich S."/>
            <person name="Harbers M."/>
            <person name="Hayashi Y."/>
            <person name="Hensch T.K."/>
            <person name="Hirokawa N."/>
            <person name="Hill D."/>
            <person name="Huminiecki L."/>
            <person name="Iacono M."/>
            <person name="Ikeo K."/>
            <person name="Iwama A."/>
            <person name="Ishikawa T."/>
            <person name="Jakt M."/>
            <person name="Kanapin A."/>
            <person name="Katoh M."/>
            <person name="Kawasawa Y."/>
            <person name="Kelso J."/>
            <person name="Kitamura H."/>
            <person name="Kitano H."/>
            <person name="Kollias G."/>
            <person name="Krishnan S.P."/>
            <person name="Kruger A."/>
            <person name="Kummerfeld S.K."/>
            <person name="Kurochkin I.V."/>
            <person name="Lareau L.F."/>
            <person name="Lazarevic D."/>
            <person name="Lipovich L."/>
            <person name="Liu J."/>
            <person name="Liuni S."/>
            <person name="McWilliam S."/>
            <person name="Madan Babu M."/>
            <person name="Madera M."/>
            <person name="Marchionni L."/>
            <person name="Matsuda H."/>
            <person name="Matsuzawa S."/>
            <person name="Miki H."/>
            <person name="Mignone F."/>
            <person name="Miyake S."/>
            <person name="Morris K."/>
            <person name="Mottagui-Tabar S."/>
            <person name="Mulder N."/>
            <person name="Nakano N."/>
            <person name="Nakauchi H."/>
            <person name="Ng P."/>
            <person name="Nilsson R."/>
            <person name="Nishiguchi S."/>
            <person name="Nishikawa S."/>
            <person name="Nori F."/>
            <person name="Ohara O."/>
            <person name="Okazaki Y."/>
            <person name="Orlando V."/>
            <person name="Pang K.C."/>
            <person name="Pavan W.J."/>
            <person name="Pavesi G."/>
            <person name="Pesole G."/>
            <person name="Petrovsky N."/>
            <person name="Piazza S."/>
            <person name="Reed J."/>
            <person name="Reid J.F."/>
            <person name="Ring B.Z."/>
            <person name="Ringwald M."/>
            <person name="Rost B."/>
            <person name="Ruan Y."/>
            <person name="Salzberg S.L."/>
            <person name="Sandelin A."/>
            <person name="Schneider C."/>
            <person name="Schoenbach C."/>
            <person name="Sekiguchi K."/>
            <person name="Semple C.A."/>
            <person name="Seno S."/>
            <person name="Sessa L."/>
            <person name="Sheng Y."/>
            <person name="Shibata Y."/>
            <person name="Shimada H."/>
            <person name="Shimada K."/>
            <person name="Silva D."/>
            <person name="Sinclair B."/>
            <person name="Sperling S."/>
            <person name="Stupka E."/>
            <person name="Sugiura K."/>
            <person name="Sultana R."/>
            <person name="Takenaka Y."/>
            <person name="Taki K."/>
            <person name="Tammoja K."/>
            <person name="Tan S.L."/>
            <person name="Tang S."/>
            <person name="Taylor M.S."/>
            <person name="Tegner J."/>
            <person name="Teichmann S.A."/>
            <person name="Ueda H.R."/>
            <person name="van Nimwegen E."/>
            <person name="Verardo R."/>
            <person name="Wei C.L."/>
            <person name="Yagi K."/>
            <person name="Yamanishi H."/>
            <person name="Zabarovsky E."/>
            <person name="Zhu S."/>
            <person name="Zimmer A."/>
            <person name="Hide W."/>
            <person name="Bult C."/>
            <person name="Grimmond S.M."/>
            <person name="Teasdale R.D."/>
            <person name="Liu E.T."/>
            <person name="Brusic V."/>
            <person name="Quackenbush J."/>
            <person name="Wahlestedt C."/>
            <person name="Mattick J.S."/>
            <person name="Hume D.A."/>
            <person name="Kai C."/>
            <person name="Sasaki D."/>
            <person name="Tomaru Y."/>
            <person name="Fukuda S."/>
            <person name="Kanamori-Katayama M."/>
            <person name="Suzuki M."/>
            <person name="Aoki J."/>
            <person name="Arakawa T."/>
            <person name="Iida J."/>
            <person name="Imamura K."/>
            <person name="Itoh M."/>
            <person name="Kato T."/>
            <person name="Kawaji H."/>
            <person name="Kawagashira N."/>
            <person name="Kawashima T."/>
            <person name="Kojima M."/>
            <person name="Kondo S."/>
            <person name="Konno H."/>
            <person name="Nakano K."/>
            <person name="Ninomiya N."/>
            <person name="Nishio T."/>
            <person name="Okada M."/>
            <person name="Plessy C."/>
            <person name="Shibata K."/>
            <person name="Shiraki T."/>
            <person name="Suzuki S."/>
            <person name="Tagami M."/>
            <person name="Waki K."/>
            <person name="Watahiki A."/>
            <person name="Okamura-Oho Y."/>
            <person name="Suzuki H."/>
            <person name="Kawai J."/>
            <person name="Hayashizaki Y."/>
        </authorList>
    </citation>
    <scope>NUCLEOTIDE SEQUENCE [LARGE SCALE MRNA]</scope>
    <source>
        <strain>C57BL/6J</strain>
        <tissue>Aorta</tissue>
    </source>
</reference>
<reference key="2">
    <citation type="journal article" date="2004" name="Genome Res.">
        <title>The status, quality, and expansion of the NIH full-length cDNA project: the Mammalian Gene Collection (MGC).</title>
        <authorList>
            <consortium name="The MGC Project Team"/>
        </authorList>
    </citation>
    <scope>NUCLEOTIDE SEQUENCE [LARGE SCALE MRNA]</scope>
    <source>
        <strain>FVB/N</strain>
        <tissue>Liver</tissue>
    </source>
</reference>
<gene>
    <name type="primary">Clec4g</name>
</gene>
<name>CLC4G_MOUSE</name>
<evidence type="ECO:0000250" key="1">
    <source>
        <dbReference type="UniProtKB" id="Q6UXB4"/>
    </source>
</evidence>
<evidence type="ECO:0000255" key="2"/>
<evidence type="ECO:0000255" key="3">
    <source>
        <dbReference type="PROSITE-ProRule" id="PRU00040"/>
    </source>
</evidence>
<evidence type="ECO:0000305" key="4"/>
<accession>Q8BNX1</accession>
<accession>Q5I0T7</accession>
<accession>Q8R188</accession>
<sequence length="294" mass="33327">MNTGEYNKLGSAIEEVSRGQLGRWECYKQRLFFLVLALLVATVLWALILSTLLSSASSKLRVLLSHQDLLRTNASEQKMTLSSLKDDIGACRNCCSVTKAQLQTTLAEFKDIQAKLMEQESILKELQERVTQDLAKASRDRENIRSELFQALEAVKRQNSSCEQCPPSWLPFQGSCYYFSETQATWDTAQSYCGGQGAHLVIVRGLNEQGFLSQHTRGRGYWLGLRAVRHLNKIQGYRWVDGASLNFSHWNSGEPNDSRGHEDCIMMLHSGLWNDAPCTNERDGWICEKRSSCY</sequence>
<dbReference type="EMBL" id="AK079992">
    <property type="protein sequence ID" value="BAC37800.1"/>
    <property type="molecule type" value="mRNA"/>
</dbReference>
<dbReference type="EMBL" id="BC025069">
    <property type="protein sequence ID" value="AAH25069.1"/>
    <property type="molecule type" value="mRNA"/>
</dbReference>
<dbReference type="EMBL" id="BC087963">
    <property type="protein sequence ID" value="AAH87963.1"/>
    <property type="molecule type" value="mRNA"/>
</dbReference>
<dbReference type="CCDS" id="CCDS22072.1"/>
<dbReference type="RefSeq" id="NP_083741.1">
    <property type="nucleotide sequence ID" value="NM_029465.3"/>
</dbReference>
<dbReference type="SMR" id="Q8BNX1"/>
<dbReference type="BioGRID" id="217802">
    <property type="interactions" value="1"/>
</dbReference>
<dbReference type="FunCoup" id="Q8BNX1">
    <property type="interactions" value="294"/>
</dbReference>
<dbReference type="IntAct" id="Q8BNX1">
    <property type="interactions" value="3"/>
</dbReference>
<dbReference type="MINT" id="Q8BNX1"/>
<dbReference type="STRING" id="10090.ENSMUSP00000059574"/>
<dbReference type="GlyCosmos" id="Q8BNX1">
    <property type="glycosylation" value="4 sites, No reported glycans"/>
</dbReference>
<dbReference type="GlyGen" id="Q8BNX1">
    <property type="glycosylation" value="4 sites"/>
</dbReference>
<dbReference type="iPTMnet" id="Q8BNX1"/>
<dbReference type="PhosphoSitePlus" id="Q8BNX1"/>
<dbReference type="SwissPalm" id="Q8BNX1"/>
<dbReference type="jPOST" id="Q8BNX1"/>
<dbReference type="PaxDb" id="10090-ENSMUSP00000059574"/>
<dbReference type="ProteomicsDB" id="285469"/>
<dbReference type="Antibodypedia" id="2674">
    <property type="antibodies" value="100 antibodies from 22 providers"/>
</dbReference>
<dbReference type="DNASU" id="75863"/>
<dbReference type="Ensembl" id="ENSMUST00000062037.7">
    <property type="protein sequence ID" value="ENSMUSP00000059574.7"/>
    <property type="gene ID" value="ENSMUSG00000074491.11"/>
</dbReference>
<dbReference type="GeneID" id="75863"/>
<dbReference type="KEGG" id="mmu:75863"/>
<dbReference type="UCSC" id="uc009ksp.2">
    <property type="organism name" value="mouse"/>
</dbReference>
<dbReference type="AGR" id="MGI:1923113"/>
<dbReference type="CTD" id="339390"/>
<dbReference type="MGI" id="MGI:1923113">
    <property type="gene designation" value="Clec4g"/>
</dbReference>
<dbReference type="VEuPathDB" id="HostDB:ENSMUSG00000074491"/>
<dbReference type="eggNOG" id="KOG4297">
    <property type="taxonomic scope" value="Eukaryota"/>
</dbReference>
<dbReference type="GeneTree" id="ENSGT00940000161836"/>
<dbReference type="HOGENOM" id="CLU_049894_7_2_1"/>
<dbReference type="InParanoid" id="Q8BNX1"/>
<dbReference type="OMA" id="GQEDCVM"/>
<dbReference type="OrthoDB" id="43641at9989"/>
<dbReference type="PhylomeDB" id="Q8BNX1"/>
<dbReference type="TreeFam" id="TF333341"/>
<dbReference type="Reactome" id="R-MMU-198933">
    <property type="pathway name" value="Immunoregulatory interactions between a Lymphoid and a non-Lymphoid cell"/>
</dbReference>
<dbReference type="BioGRID-ORCS" id="75863">
    <property type="hits" value="2 hits in 76 CRISPR screens"/>
</dbReference>
<dbReference type="PRO" id="PR:Q8BNX1"/>
<dbReference type="Proteomes" id="UP000000589">
    <property type="component" value="Chromosome 8"/>
</dbReference>
<dbReference type="RNAct" id="Q8BNX1">
    <property type="molecule type" value="protein"/>
</dbReference>
<dbReference type="Bgee" id="ENSMUSG00000074491">
    <property type="expression patterns" value="Expressed in left lobe of liver and 42 other cell types or tissues"/>
</dbReference>
<dbReference type="ExpressionAtlas" id="Q8BNX1">
    <property type="expression patterns" value="baseline and differential"/>
</dbReference>
<dbReference type="GO" id="GO:0005886">
    <property type="term" value="C:plasma membrane"/>
    <property type="evidence" value="ECO:0000314"/>
    <property type="project" value="MGI"/>
</dbReference>
<dbReference type="GO" id="GO:0097367">
    <property type="term" value="F:carbohydrate derivative binding"/>
    <property type="evidence" value="ECO:0007669"/>
    <property type="project" value="Ensembl"/>
</dbReference>
<dbReference type="GO" id="GO:0005537">
    <property type="term" value="F:D-mannose binding"/>
    <property type="evidence" value="ECO:0007669"/>
    <property type="project" value="Ensembl"/>
</dbReference>
<dbReference type="GO" id="GO:0070061">
    <property type="term" value="F:fructose binding"/>
    <property type="evidence" value="ECO:0007669"/>
    <property type="project" value="Ensembl"/>
</dbReference>
<dbReference type="GO" id="GO:0030247">
    <property type="term" value="F:polysaccharide binding"/>
    <property type="evidence" value="ECO:0000314"/>
    <property type="project" value="MGI"/>
</dbReference>
<dbReference type="GO" id="GO:0120274">
    <property type="term" value="F:virus coreceptor activity"/>
    <property type="evidence" value="ECO:0007669"/>
    <property type="project" value="Ensembl"/>
</dbReference>
<dbReference type="GO" id="GO:0001618">
    <property type="term" value="F:virus receptor activity"/>
    <property type="evidence" value="ECO:0007669"/>
    <property type="project" value="Ensembl"/>
</dbReference>
<dbReference type="GO" id="GO:0046633">
    <property type="term" value="P:alpha-beta T cell proliferation"/>
    <property type="evidence" value="ECO:0000315"/>
    <property type="project" value="MGI"/>
</dbReference>
<dbReference type="GO" id="GO:0033080">
    <property type="term" value="P:immature T cell proliferation in thymus"/>
    <property type="evidence" value="ECO:0000315"/>
    <property type="project" value="MGI"/>
</dbReference>
<dbReference type="GO" id="GO:0046642">
    <property type="term" value="P:negative regulation of alpha-beta T cell proliferation"/>
    <property type="evidence" value="ECO:0000315"/>
    <property type="project" value="MGI"/>
</dbReference>
<dbReference type="GO" id="GO:0033088">
    <property type="term" value="P:negative regulation of immature T cell proliferation in thymus"/>
    <property type="evidence" value="ECO:0000315"/>
    <property type="project" value="MGI"/>
</dbReference>
<dbReference type="GO" id="GO:0002710">
    <property type="term" value="P:negative regulation of T cell mediated immunity"/>
    <property type="evidence" value="ECO:0000314"/>
    <property type="project" value="MGI"/>
</dbReference>
<dbReference type="GO" id="GO:0042130">
    <property type="term" value="P:negative regulation of T cell proliferation"/>
    <property type="evidence" value="ECO:0000314"/>
    <property type="project" value="MGI"/>
</dbReference>
<dbReference type="GO" id="GO:1903902">
    <property type="term" value="P:positive regulation of viral life cycle"/>
    <property type="evidence" value="ECO:0007669"/>
    <property type="project" value="Ensembl"/>
</dbReference>
<dbReference type="GO" id="GO:0002456">
    <property type="term" value="P:T cell mediated immunity"/>
    <property type="evidence" value="ECO:0000315"/>
    <property type="project" value="MGI"/>
</dbReference>
<dbReference type="Gene3D" id="3.10.100.10">
    <property type="entry name" value="Mannose-Binding Protein A, subunit A"/>
    <property type="match status" value="1"/>
</dbReference>
<dbReference type="InterPro" id="IPR001304">
    <property type="entry name" value="C-type_lectin-like"/>
</dbReference>
<dbReference type="InterPro" id="IPR016186">
    <property type="entry name" value="C-type_lectin-like/link_sf"/>
</dbReference>
<dbReference type="InterPro" id="IPR050111">
    <property type="entry name" value="C-type_lectin/snaclec_domain"/>
</dbReference>
<dbReference type="InterPro" id="IPR018378">
    <property type="entry name" value="C-type_lectin_CS"/>
</dbReference>
<dbReference type="InterPro" id="IPR016187">
    <property type="entry name" value="CTDL_fold"/>
</dbReference>
<dbReference type="PANTHER" id="PTHR22803">
    <property type="entry name" value="MANNOSE, PHOSPHOLIPASE, LECTIN RECEPTOR RELATED"/>
    <property type="match status" value="1"/>
</dbReference>
<dbReference type="Pfam" id="PF00059">
    <property type="entry name" value="Lectin_C"/>
    <property type="match status" value="1"/>
</dbReference>
<dbReference type="SMART" id="SM00034">
    <property type="entry name" value="CLECT"/>
    <property type="match status" value="1"/>
</dbReference>
<dbReference type="SUPFAM" id="SSF56436">
    <property type="entry name" value="C-type lectin-like"/>
    <property type="match status" value="1"/>
</dbReference>
<dbReference type="PROSITE" id="PS00615">
    <property type="entry name" value="C_TYPE_LECTIN_1"/>
    <property type="match status" value="1"/>
</dbReference>
<dbReference type="PROSITE" id="PS50041">
    <property type="entry name" value="C_TYPE_LECTIN_2"/>
    <property type="match status" value="1"/>
</dbReference>
<comment type="function">
    <text evidence="1">Binds mannose, N-acetylglucosamine (GlcNAc) and fucose, but not galactose, in a Ca(2+)-dependent manner.</text>
</comment>
<comment type="interaction">
    <interactant intactId="EBI-11176364">
        <id>Q8BNX1</id>
    </interactant>
    <interactant intactId="EBI-2433139">
        <id>P56817</id>
        <label>BACE1</label>
    </interactant>
    <organismsDiffer>true</organismsDiffer>
    <experiments>2</experiments>
</comment>
<comment type="subcellular location">
    <subcellularLocation>
        <location evidence="1">Cell membrane</location>
        <topology evidence="1">Single-pass type II membrane protein</topology>
    </subcellularLocation>
</comment>
<organism>
    <name type="scientific">Mus musculus</name>
    <name type="common">Mouse</name>
    <dbReference type="NCBI Taxonomy" id="10090"/>
    <lineage>
        <taxon>Eukaryota</taxon>
        <taxon>Metazoa</taxon>
        <taxon>Chordata</taxon>
        <taxon>Craniata</taxon>
        <taxon>Vertebrata</taxon>
        <taxon>Euteleostomi</taxon>
        <taxon>Mammalia</taxon>
        <taxon>Eutheria</taxon>
        <taxon>Euarchontoglires</taxon>
        <taxon>Glires</taxon>
        <taxon>Rodentia</taxon>
        <taxon>Myomorpha</taxon>
        <taxon>Muroidea</taxon>
        <taxon>Muridae</taxon>
        <taxon>Murinae</taxon>
        <taxon>Mus</taxon>
        <taxon>Mus</taxon>
    </lineage>
</organism>
<protein>
    <recommendedName>
        <fullName>C-type lectin domain family 4 member G</fullName>
    </recommendedName>
</protein>